<dbReference type="EMBL" id="U18997">
    <property type="protein sequence ID" value="AAA58018.1"/>
    <property type="molecule type" value="Genomic_DNA"/>
</dbReference>
<dbReference type="EMBL" id="U00096">
    <property type="protein sequence ID" value="AAC76248.1"/>
    <property type="molecule type" value="Genomic_DNA"/>
</dbReference>
<dbReference type="EMBL" id="AP009048">
    <property type="protein sequence ID" value="BAE77260.1"/>
    <property type="molecule type" value="Genomic_DNA"/>
</dbReference>
<dbReference type="PIR" id="B65113">
    <property type="entry name" value="B65113"/>
</dbReference>
<dbReference type="RefSeq" id="NP_417683.1">
    <property type="nucleotide sequence ID" value="NC_000913.3"/>
</dbReference>
<dbReference type="RefSeq" id="WP_000914994.1">
    <property type="nucleotide sequence ID" value="NZ_SSZK01000007.1"/>
</dbReference>
<dbReference type="SMR" id="P45420"/>
<dbReference type="BioGRID" id="4261874">
    <property type="interactions" value="172"/>
</dbReference>
<dbReference type="DIP" id="DIP-12277N"/>
<dbReference type="FunCoup" id="P45420">
    <property type="interactions" value="59"/>
</dbReference>
<dbReference type="STRING" id="511145.b3216"/>
<dbReference type="TCDB" id="1.B.11.5.1">
    <property type="family name" value="the outer membrane fimbrial usher porin (fup) family"/>
</dbReference>
<dbReference type="PaxDb" id="511145-b3216"/>
<dbReference type="EnsemblBacteria" id="AAC76248">
    <property type="protein sequence ID" value="AAC76248"/>
    <property type="gene ID" value="b3216"/>
</dbReference>
<dbReference type="GeneID" id="947738"/>
<dbReference type="KEGG" id="ecj:JW3183"/>
<dbReference type="KEGG" id="eco:b3216"/>
<dbReference type="KEGG" id="ecoc:C3026_17495"/>
<dbReference type="PATRIC" id="fig|511145.12.peg.3311"/>
<dbReference type="EchoBASE" id="EB2661"/>
<dbReference type="eggNOG" id="COG3188">
    <property type="taxonomic scope" value="Bacteria"/>
</dbReference>
<dbReference type="HOGENOM" id="CLU_009120_1_2_6"/>
<dbReference type="InParanoid" id="P45420"/>
<dbReference type="OMA" id="ASINVNW"/>
<dbReference type="OrthoDB" id="6465993at2"/>
<dbReference type="PhylomeDB" id="P45420"/>
<dbReference type="BioCyc" id="EcoCyc:G7670-MONOMER"/>
<dbReference type="PRO" id="PR:P45420"/>
<dbReference type="Proteomes" id="UP000000625">
    <property type="component" value="Chromosome"/>
</dbReference>
<dbReference type="GO" id="GO:0009279">
    <property type="term" value="C:cell outer membrane"/>
    <property type="evidence" value="ECO:0000318"/>
    <property type="project" value="GO_Central"/>
</dbReference>
<dbReference type="GO" id="GO:0015473">
    <property type="term" value="F:fimbrial usher porin activity"/>
    <property type="evidence" value="ECO:0000318"/>
    <property type="project" value="GO_Central"/>
</dbReference>
<dbReference type="GO" id="GO:0009297">
    <property type="term" value="P:pilus assembly"/>
    <property type="evidence" value="ECO:0000318"/>
    <property type="project" value="GO_Central"/>
</dbReference>
<dbReference type="Gene3D" id="2.60.40.2070">
    <property type="match status" value="1"/>
</dbReference>
<dbReference type="Gene3D" id="2.60.40.3110">
    <property type="match status" value="1"/>
</dbReference>
<dbReference type="Gene3D" id="3.10.20.410">
    <property type="match status" value="1"/>
</dbReference>
<dbReference type="Gene3D" id="2.60.40.2610">
    <property type="entry name" value="Outer membrane usher protein FimD, plug domain"/>
    <property type="match status" value="1"/>
</dbReference>
<dbReference type="InterPro" id="IPR000015">
    <property type="entry name" value="Fimb_usher"/>
</dbReference>
<dbReference type="InterPro" id="IPR018030">
    <property type="entry name" value="Fimbrial_membr_usher_CS"/>
</dbReference>
<dbReference type="InterPro" id="IPR042186">
    <property type="entry name" value="FimD_plug_dom"/>
</dbReference>
<dbReference type="InterPro" id="IPR025949">
    <property type="entry name" value="PapC-like_C"/>
</dbReference>
<dbReference type="InterPro" id="IPR043142">
    <property type="entry name" value="PapC-like_C_sf"/>
</dbReference>
<dbReference type="InterPro" id="IPR025885">
    <property type="entry name" value="PapC_N"/>
</dbReference>
<dbReference type="InterPro" id="IPR037224">
    <property type="entry name" value="PapC_N_sf"/>
</dbReference>
<dbReference type="NCBIfam" id="NF011832">
    <property type="entry name" value="PRK15304.1"/>
    <property type="match status" value="1"/>
</dbReference>
<dbReference type="PANTHER" id="PTHR30451:SF8">
    <property type="entry name" value="FIMBRIAL USHER PROTEIN"/>
    <property type="match status" value="1"/>
</dbReference>
<dbReference type="PANTHER" id="PTHR30451">
    <property type="entry name" value="OUTER MEMBRANE USHER PROTEIN"/>
    <property type="match status" value="1"/>
</dbReference>
<dbReference type="Pfam" id="PF13953">
    <property type="entry name" value="PapC_C"/>
    <property type="match status" value="1"/>
</dbReference>
<dbReference type="Pfam" id="PF13954">
    <property type="entry name" value="PapC_N"/>
    <property type="match status" value="1"/>
</dbReference>
<dbReference type="Pfam" id="PF00577">
    <property type="entry name" value="Usher"/>
    <property type="match status" value="1"/>
</dbReference>
<dbReference type="SUPFAM" id="SSF141729">
    <property type="entry name" value="FimD N-terminal domain-like"/>
    <property type="match status" value="1"/>
</dbReference>
<dbReference type="PROSITE" id="PS01151">
    <property type="entry name" value="FIMBRIAL_USHER"/>
    <property type="match status" value="1"/>
</dbReference>
<reference key="1">
    <citation type="journal article" date="1997" name="Science">
        <title>The complete genome sequence of Escherichia coli K-12.</title>
        <authorList>
            <person name="Blattner F.R."/>
            <person name="Plunkett G. III"/>
            <person name="Bloch C.A."/>
            <person name="Perna N.T."/>
            <person name="Burland V."/>
            <person name="Riley M."/>
            <person name="Collado-Vides J."/>
            <person name="Glasner J.D."/>
            <person name="Rode C.K."/>
            <person name="Mayhew G.F."/>
            <person name="Gregor J."/>
            <person name="Davis N.W."/>
            <person name="Kirkpatrick H.A."/>
            <person name="Goeden M.A."/>
            <person name="Rose D.J."/>
            <person name="Mau B."/>
            <person name="Shao Y."/>
        </authorList>
    </citation>
    <scope>NUCLEOTIDE SEQUENCE [LARGE SCALE GENOMIC DNA]</scope>
    <source>
        <strain>K12 / MG1655 / ATCC 47076</strain>
    </source>
</reference>
<reference key="2">
    <citation type="journal article" date="2006" name="Mol. Syst. Biol.">
        <title>Highly accurate genome sequences of Escherichia coli K-12 strains MG1655 and W3110.</title>
        <authorList>
            <person name="Hayashi K."/>
            <person name="Morooka N."/>
            <person name="Yamamoto Y."/>
            <person name="Fujita K."/>
            <person name="Isono K."/>
            <person name="Choi S."/>
            <person name="Ohtsubo E."/>
            <person name="Baba T."/>
            <person name="Wanner B.L."/>
            <person name="Mori H."/>
            <person name="Horiuchi T."/>
        </authorList>
    </citation>
    <scope>NUCLEOTIDE SEQUENCE [LARGE SCALE GENOMIC DNA]</scope>
    <source>
        <strain>K12 / W3110 / ATCC 27325 / DSM 5911</strain>
    </source>
</reference>
<evidence type="ECO:0000250" key="1"/>
<evidence type="ECO:0000255" key="2"/>
<evidence type="ECO:0000305" key="3"/>
<gene>
    <name type="primary">yhcD</name>
    <name type="ordered locus">b3216</name>
    <name type="ordered locus">JW3183</name>
</gene>
<keyword id="KW-0998">Cell outer membrane</keyword>
<keyword id="KW-1015">Disulfide bond</keyword>
<keyword id="KW-1029">Fimbrium biogenesis</keyword>
<keyword id="KW-0472">Membrane</keyword>
<keyword id="KW-1185">Reference proteome</keyword>
<keyword id="KW-0732">Signal</keyword>
<keyword id="KW-0812">Transmembrane</keyword>
<keyword id="KW-1134">Transmembrane beta strand</keyword>
<keyword id="KW-0813">Transport</keyword>
<accession>P45420</accession>
<accession>Q2M8Z6</accession>
<name>YHCD_ECOLI</name>
<organism>
    <name type="scientific">Escherichia coli (strain K12)</name>
    <dbReference type="NCBI Taxonomy" id="83333"/>
    <lineage>
        <taxon>Bacteria</taxon>
        <taxon>Pseudomonadati</taxon>
        <taxon>Pseudomonadota</taxon>
        <taxon>Gammaproteobacteria</taxon>
        <taxon>Enterobacterales</taxon>
        <taxon>Enterobacteriaceae</taxon>
        <taxon>Escherichia</taxon>
    </lineage>
</organism>
<comment type="function">
    <text evidence="1">Involved in the export and assembly of a fimbrial subunit across the outer membrane.</text>
</comment>
<comment type="subcellular location">
    <subcellularLocation>
        <location evidence="1">Cell outer membrane</location>
        <topology evidence="1">Multi-pass membrane protein</topology>
    </subcellularLocation>
</comment>
<comment type="similarity">
    <text evidence="3">Belongs to the fimbrial export usher family.</text>
</comment>
<feature type="signal peptide" evidence="2">
    <location>
        <begin position="1"/>
        <end position="21"/>
    </location>
</feature>
<feature type="chain" id="PRO_0000009333" description="Uncharacterized outer membrane usher protein YhcD">
    <location>
        <begin position="22"/>
        <end position="793"/>
    </location>
</feature>
<feature type="disulfide bond" evidence="2">
    <location>
        <begin position="769"/>
        <end position="792"/>
    </location>
</feature>
<protein>
    <recommendedName>
        <fullName>Uncharacterized outer membrane usher protein YhcD</fullName>
    </recommendedName>
</protein>
<sequence>MLKKTLLAYTIGFAFSPPANADGIEIAAVDFDRETLKSLGVDPNISHYFSRSARFLPGEYSLIVSVNGEKKGNIATRFDENGDICLDQAFLQQAGLKIPSEEKNGCYDYILSYPGTTITPLPNQEALDIIVSPQAIIPIGLDLTNAATGGTAALLNYSLMSSRAEFSNGSSDYSQAALEGGININDWMLRSHQFLTQTNGTFSNQNSSTYLQRTFTDLKTLMRAGEVNLNNSVLEGASIYGIEIAPDNALQTSGSGVQVTGIANTSQARVEIRQQGVLIHSILVPAGAFTIPDVPVRNGNSDLNVTVVETDGSSHNYIVPSTLFNQHVESFQGYRFAIGRVDDDYDESPWVISASSGWNLTRWSAMNGGVIVAENYQAASIRSSLVPLPDLTVSSQISTSQDTKDSLQGQKYRLDANYNLPFSLGLTTSLTRSDRHYRELSEAIDDDYTDPTKSTYALGLNWSNSILGGFNISGYKTYSYDGDNDSSNLNINWNKAFKHATVSVNWQHQLSASENNEDDGDLFYVNISIPFGRSNTATLYTRHDDHKTHYGTGVMGVVSDEMSYYVNAERDHDERETSLNGSISSNLHYTQVSLAAGASGSDSRTYNGTMSGGIAVHDQGVTFSPWTINDTFAIAKMDNNIAGVRITSQAGPVWTDFRGNAVIPSIQPWRTSGVEIDTASLPKNVDIGNGTKMIKQGRGAVGKVGFSAITQRRALLNITLSDGKKLPRGVAIEDSEGNYLTTSVDDGVVFLNNIKPDMVLDIKDEQQSCRIHLTFPEDAPKDVFYETATGECQ</sequence>
<proteinExistence type="inferred from homology"/>